<keyword id="KW-0456">Lyase</keyword>
<keyword id="KW-0472">Membrane</keyword>
<keyword id="KW-0479">Metal-binding</keyword>
<keyword id="KW-0496">Mitochondrion</keyword>
<keyword id="KW-0999">Mitochondrion inner membrane</keyword>
<keyword id="KW-1185">Reference proteome</keyword>
<keyword id="KW-0809">Transit peptide</keyword>
<keyword id="KW-0831">Ubiquinone biosynthesis</keyword>
<keyword id="KW-0862">Zinc</keyword>
<reference key="1">
    <citation type="journal article" date="2004" name="Nature">
        <title>Genome evolution in yeasts.</title>
        <authorList>
            <person name="Dujon B."/>
            <person name="Sherman D."/>
            <person name="Fischer G."/>
            <person name="Durrens P."/>
            <person name="Casaregola S."/>
            <person name="Lafontaine I."/>
            <person name="de Montigny J."/>
            <person name="Marck C."/>
            <person name="Neuveglise C."/>
            <person name="Talla E."/>
            <person name="Goffard N."/>
            <person name="Frangeul L."/>
            <person name="Aigle M."/>
            <person name="Anthouard V."/>
            <person name="Babour A."/>
            <person name="Barbe V."/>
            <person name="Barnay S."/>
            <person name="Blanchin S."/>
            <person name="Beckerich J.-M."/>
            <person name="Beyne E."/>
            <person name="Bleykasten C."/>
            <person name="Boisrame A."/>
            <person name="Boyer J."/>
            <person name="Cattolico L."/>
            <person name="Confanioleri F."/>
            <person name="de Daruvar A."/>
            <person name="Despons L."/>
            <person name="Fabre E."/>
            <person name="Fairhead C."/>
            <person name="Ferry-Dumazet H."/>
            <person name="Groppi A."/>
            <person name="Hantraye F."/>
            <person name="Hennequin C."/>
            <person name="Jauniaux N."/>
            <person name="Joyet P."/>
            <person name="Kachouri R."/>
            <person name="Kerrest A."/>
            <person name="Koszul R."/>
            <person name="Lemaire M."/>
            <person name="Lesur I."/>
            <person name="Ma L."/>
            <person name="Muller H."/>
            <person name="Nicaud J.-M."/>
            <person name="Nikolski M."/>
            <person name="Oztas S."/>
            <person name="Ozier-Kalogeropoulos O."/>
            <person name="Pellenz S."/>
            <person name="Potier S."/>
            <person name="Richard G.-F."/>
            <person name="Straub M.-L."/>
            <person name="Suleau A."/>
            <person name="Swennen D."/>
            <person name="Tekaia F."/>
            <person name="Wesolowski-Louvel M."/>
            <person name="Westhof E."/>
            <person name="Wirth B."/>
            <person name="Zeniou-Meyer M."/>
            <person name="Zivanovic Y."/>
            <person name="Bolotin-Fukuhara M."/>
            <person name="Thierry A."/>
            <person name="Bouchier C."/>
            <person name="Caudron B."/>
            <person name="Scarpelli C."/>
            <person name="Gaillardin C."/>
            <person name="Weissenbach J."/>
            <person name="Wincker P."/>
            <person name="Souciet J.-L."/>
        </authorList>
    </citation>
    <scope>NUCLEOTIDE SEQUENCE [LARGE SCALE GENOMIC DNA]</scope>
    <source>
        <strain>ATCC 2001 / BCRC 20586 / JCM 3761 / NBRC 0622 / NRRL Y-65 / CBS 138</strain>
    </source>
</reference>
<proteinExistence type="inferred from homology"/>
<name>COQ4_CANGA</name>
<evidence type="ECO:0000255" key="1">
    <source>
        <dbReference type="HAMAP-Rule" id="MF_03111"/>
    </source>
</evidence>
<comment type="function">
    <text evidence="1">Lyase that catalyzes the C1-decarboxylation of 4-hydroxy-3-methoxy-5-(all-trans-polyprenyl)benzoic acid into 2-methoxy-6-(all-trans-polyprenyl)phenol during ubiquinone biosynthesis.</text>
</comment>
<comment type="catalytic activity">
    <reaction evidence="1">
        <text>a 4-hydroxy-3-methoxy-5-(all-trans-polyprenyl)benzoate + H(+) = a 2-methoxy-6-(all-trans-polyprenyl)phenol + CO2</text>
        <dbReference type="Rhea" id="RHEA:81179"/>
        <dbReference type="Rhea" id="RHEA-COMP:9551"/>
        <dbReference type="Rhea" id="RHEA-COMP:10931"/>
        <dbReference type="ChEBI" id="CHEBI:15378"/>
        <dbReference type="ChEBI" id="CHEBI:16526"/>
        <dbReference type="ChEBI" id="CHEBI:62731"/>
        <dbReference type="ChEBI" id="CHEBI:84443"/>
        <dbReference type="EC" id="4.1.1.130"/>
    </reaction>
</comment>
<comment type="cofactor">
    <cofactor evidence="1">
        <name>Zn(2+)</name>
        <dbReference type="ChEBI" id="CHEBI:29105"/>
    </cofactor>
</comment>
<comment type="pathway">
    <text evidence="1">Cofactor biosynthesis; ubiquinone biosynthesis.</text>
</comment>
<comment type="subunit">
    <text evidence="1">Component of a multi-subunit COQ enzyme complex, composed of at least COQ3, COQ4, COQ5, COQ6, COQ7 and COQ9.</text>
</comment>
<comment type="subcellular location">
    <subcellularLocation>
        <location evidence="1">Mitochondrion inner membrane</location>
        <topology evidence="1">Peripheral membrane protein</topology>
        <orientation evidence="1">Matrix side</orientation>
    </subcellularLocation>
</comment>
<comment type="similarity">
    <text evidence="1">Belongs to the COQ4 family.</text>
</comment>
<organism>
    <name type="scientific">Candida glabrata (strain ATCC 2001 / BCRC 20586 / JCM 3761 / NBRC 0622 / NRRL Y-65 / CBS 138)</name>
    <name type="common">Yeast</name>
    <name type="synonym">Nakaseomyces glabratus</name>
    <dbReference type="NCBI Taxonomy" id="284593"/>
    <lineage>
        <taxon>Eukaryota</taxon>
        <taxon>Fungi</taxon>
        <taxon>Dikarya</taxon>
        <taxon>Ascomycota</taxon>
        <taxon>Saccharomycotina</taxon>
        <taxon>Saccharomycetes</taxon>
        <taxon>Saccharomycetales</taxon>
        <taxon>Saccharomycetaceae</taxon>
        <taxon>Nakaseomyces</taxon>
    </lineage>
</organism>
<feature type="transit peptide" description="Mitochondrion" evidence="1">
    <location>
        <begin position="1"/>
        <end position="31"/>
    </location>
</feature>
<feature type="chain" id="PRO_0000388105" description="Ubiquinone biosynthesis protein COQ4, mitochondrial">
    <location>
        <begin position="32"/>
        <end position="330"/>
    </location>
</feature>
<feature type="binding site" evidence="1">
    <location>
        <position position="212"/>
    </location>
    <ligand>
        <name>Zn(2+)</name>
        <dbReference type="ChEBI" id="CHEBI:29105"/>
    </ligand>
</feature>
<feature type="binding site" evidence="1">
    <location>
        <position position="213"/>
    </location>
    <ligand>
        <name>Zn(2+)</name>
        <dbReference type="ChEBI" id="CHEBI:29105"/>
    </ligand>
</feature>
<feature type="binding site" evidence="1">
    <location>
        <position position="216"/>
    </location>
    <ligand>
        <name>Zn(2+)</name>
        <dbReference type="ChEBI" id="CHEBI:29105"/>
    </ligand>
</feature>
<feature type="binding site" evidence="1">
    <location>
        <position position="228"/>
    </location>
    <ligand>
        <name>Zn(2+)</name>
        <dbReference type="ChEBI" id="CHEBI:29105"/>
    </ligand>
</feature>
<dbReference type="EC" id="4.1.1.130" evidence="1"/>
<dbReference type="EMBL" id="CR380952">
    <property type="protein sequence ID" value="CAG59130.1"/>
    <property type="molecule type" value="Genomic_DNA"/>
</dbReference>
<dbReference type="RefSeq" id="XP_446206.1">
    <property type="nucleotide sequence ID" value="XM_446206.1"/>
</dbReference>
<dbReference type="SMR" id="Q6FU88"/>
<dbReference type="FunCoup" id="Q6FU88">
    <property type="interactions" value="557"/>
</dbReference>
<dbReference type="STRING" id="284593.Q6FU88"/>
<dbReference type="EnsemblFungi" id="CAGL0F05423g-T">
    <property type="protein sequence ID" value="CAGL0F05423g-T-p1"/>
    <property type="gene ID" value="CAGL0F05423g"/>
</dbReference>
<dbReference type="KEGG" id="cgr:2887684"/>
<dbReference type="CGD" id="CAL0129611">
    <property type="gene designation" value="CAGL0F05423g"/>
</dbReference>
<dbReference type="VEuPathDB" id="FungiDB:B1J91_F05423g"/>
<dbReference type="VEuPathDB" id="FungiDB:CAGL0F05423g"/>
<dbReference type="eggNOG" id="KOG3244">
    <property type="taxonomic scope" value="Eukaryota"/>
</dbReference>
<dbReference type="HOGENOM" id="CLU_061241_0_2_1"/>
<dbReference type="InParanoid" id="Q6FU88"/>
<dbReference type="OMA" id="YYERHFH"/>
<dbReference type="UniPathway" id="UPA00232"/>
<dbReference type="Proteomes" id="UP000002428">
    <property type="component" value="Chromosome F"/>
</dbReference>
<dbReference type="GO" id="GO:0031314">
    <property type="term" value="C:extrinsic component of mitochondrial inner membrane"/>
    <property type="evidence" value="ECO:0007669"/>
    <property type="project" value="UniProtKB-UniRule"/>
</dbReference>
<dbReference type="GO" id="GO:0006744">
    <property type="term" value="P:ubiquinone biosynthetic process"/>
    <property type="evidence" value="ECO:0007669"/>
    <property type="project" value="UniProtKB-UniRule"/>
</dbReference>
<dbReference type="HAMAP" id="MF_03111">
    <property type="entry name" value="Coq4"/>
    <property type="match status" value="1"/>
</dbReference>
<dbReference type="InterPro" id="IPR007715">
    <property type="entry name" value="Coq4"/>
</dbReference>
<dbReference type="InterPro" id="IPR027540">
    <property type="entry name" value="Coq4_euk"/>
</dbReference>
<dbReference type="PANTHER" id="PTHR12922">
    <property type="entry name" value="UBIQUINONE BIOSYNTHESIS PROTEIN"/>
    <property type="match status" value="1"/>
</dbReference>
<dbReference type="PANTHER" id="PTHR12922:SF7">
    <property type="entry name" value="UBIQUINONE BIOSYNTHESIS PROTEIN COQ4 HOMOLOG, MITOCHONDRIAL"/>
    <property type="match status" value="1"/>
</dbReference>
<dbReference type="Pfam" id="PF05019">
    <property type="entry name" value="Coq4"/>
    <property type="match status" value="1"/>
</dbReference>
<accession>Q6FU88</accession>
<protein>
    <recommendedName>
        <fullName evidence="1">Ubiquinone biosynthesis protein COQ4, mitochondrial</fullName>
    </recommendedName>
    <alternativeName>
        <fullName>4-hydroxy-3-methoxy-5-polyprenylbenzoate decarboxylase</fullName>
        <ecNumber evidence="1">4.1.1.130</ecNumber>
    </alternativeName>
    <alternativeName>
        <fullName evidence="1">Coenzyme Q biosynthesis protein 4</fullName>
    </alternativeName>
</protein>
<sequence>MLQSTKVTKSVLTNVLRVEQRRGFLLSGAAVALGSTYIFGRDAKLADAMDRGELHNKNEDYAKLRAERTEQRIKALSNNRPMEPRYEGHVPLYLHEKMLLFAISGIRAFFHPENGINIVQLGEATAFPIFLENLKQTMLADETGRRILRDQPNVRTDILDMDKLSKLPKNTFGYTFYKWLEKEKVSPDTRAPVTYIDDPIHAFVFKRYRQCHDFYHALNDLPIIIEGEIIVKALESANMGIPMATLGWMLAPLRLKKAQRDRLYGTYLPWAIKTGLTCKPLINVYWEELLEKDVEELRQELGIKMPPDLRAMRAKRKAMIKRLNEKYQKN</sequence>
<gene>
    <name evidence="1" type="primary">COQ4</name>
    <name type="ordered locus">CAGL0F05423g</name>
</gene>